<comment type="subcellular location">
    <subcellularLocation>
        <location evidence="2">Cell membrane</location>
        <topology evidence="2">Multi-pass membrane protein</topology>
    </subcellularLocation>
</comment>
<comment type="similarity">
    <text evidence="2">Belongs to the bacteriophage holin family. Cp-1 holin subfamily.</text>
</comment>
<protein>
    <recommendedName>
        <fullName>Uncharacterized protein YtkC</fullName>
    </recommendedName>
</protein>
<accession>O34883</accession>
<dbReference type="EMBL" id="AF008220">
    <property type="protein sequence ID" value="AAC00238.1"/>
    <property type="molecule type" value="Genomic_DNA"/>
</dbReference>
<dbReference type="EMBL" id="AL009126">
    <property type="protein sequence ID" value="CAB15042.1"/>
    <property type="molecule type" value="Genomic_DNA"/>
</dbReference>
<dbReference type="PIR" id="D69994">
    <property type="entry name" value="D69994"/>
</dbReference>
<dbReference type="RefSeq" id="NP_390942.1">
    <property type="nucleotide sequence ID" value="NC_000964.3"/>
</dbReference>
<dbReference type="RefSeq" id="WP_003229085.1">
    <property type="nucleotide sequence ID" value="NZ_OZ025638.1"/>
</dbReference>
<dbReference type="SMR" id="O34883"/>
<dbReference type="FunCoup" id="O34883">
    <property type="interactions" value="20"/>
</dbReference>
<dbReference type="STRING" id="224308.BSU30640"/>
<dbReference type="PaxDb" id="224308-BSU30640"/>
<dbReference type="EnsemblBacteria" id="CAB15042">
    <property type="protein sequence ID" value="CAB15042"/>
    <property type="gene ID" value="BSU_30640"/>
</dbReference>
<dbReference type="GeneID" id="937209"/>
<dbReference type="KEGG" id="bsu:BSU30640"/>
<dbReference type="PATRIC" id="fig|224308.179.peg.3321"/>
<dbReference type="eggNOG" id="COG4824">
    <property type="taxonomic scope" value="Bacteria"/>
</dbReference>
<dbReference type="InParanoid" id="O34883"/>
<dbReference type="OrthoDB" id="2862310at2"/>
<dbReference type="PhylomeDB" id="O34883"/>
<dbReference type="BioCyc" id="BSUB:BSU30640-MONOMER"/>
<dbReference type="Proteomes" id="UP000001570">
    <property type="component" value="Chromosome"/>
</dbReference>
<dbReference type="GO" id="GO:0005886">
    <property type="term" value="C:plasma membrane"/>
    <property type="evidence" value="ECO:0007669"/>
    <property type="project" value="UniProtKB-SubCell"/>
</dbReference>
<dbReference type="InterPro" id="IPR006480">
    <property type="entry name" value="Phage_holin_4_1"/>
</dbReference>
<dbReference type="NCBIfam" id="TIGR01593">
    <property type="entry name" value="holin_tox_secr"/>
    <property type="match status" value="1"/>
</dbReference>
<dbReference type="Pfam" id="PF05105">
    <property type="entry name" value="Phage_holin_4_1"/>
    <property type="match status" value="1"/>
</dbReference>
<keyword id="KW-1003">Cell membrane</keyword>
<keyword id="KW-0472">Membrane</keyword>
<keyword id="KW-1185">Reference proteome</keyword>
<keyword id="KW-0812">Transmembrane</keyword>
<keyword id="KW-1133">Transmembrane helix</keyword>
<reference key="1">
    <citation type="journal article" date="1997" name="Microbiology">
        <title>Sequencing and functional annotation of the Bacillus subtilis genes in the 200 kb rrnB-dnaB region.</title>
        <authorList>
            <person name="Lapidus A."/>
            <person name="Galleron N."/>
            <person name="Sorokin A."/>
            <person name="Ehrlich S.D."/>
        </authorList>
    </citation>
    <scope>NUCLEOTIDE SEQUENCE [GENOMIC DNA]</scope>
    <source>
        <strain>168</strain>
    </source>
</reference>
<reference key="2">
    <citation type="journal article" date="1997" name="Nature">
        <title>The complete genome sequence of the Gram-positive bacterium Bacillus subtilis.</title>
        <authorList>
            <person name="Kunst F."/>
            <person name="Ogasawara N."/>
            <person name="Moszer I."/>
            <person name="Albertini A.M."/>
            <person name="Alloni G."/>
            <person name="Azevedo V."/>
            <person name="Bertero M.G."/>
            <person name="Bessieres P."/>
            <person name="Bolotin A."/>
            <person name="Borchert S."/>
            <person name="Borriss R."/>
            <person name="Boursier L."/>
            <person name="Brans A."/>
            <person name="Braun M."/>
            <person name="Brignell S.C."/>
            <person name="Bron S."/>
            <person name="Brouillet S."/>
            <person name="Bruschi C.V."/>
            <person name="Caldwell B."/>
            <person name="Capuano V."/>
            <person name="Carter N.M."/>
            <person name="Choi S.-K."/>
            <person name="Codani J.-J."/>
            <person name="Connerton I.F."/>
            <person name="Cummings N.J."/>
            <person name="Daniel R.A."/>
            <person name="Denizot F."/>
            <person name="Devine K.M."/>
            <person name="Duesterhoeft A."/>
            <person name="Ehrlich S.D."/>
            <person name="Emmerson P.T."/>
            <person name="Entian K.-D."/>
            <person name="Errington J."/>
            <person name="Fabret C."/>
            <person name="Ferrari E."/>
            <person name="Foulger D."/>
            <person name="Fritz C."/>
            <person name="Fujita M."/>
            <person name="Fujita Y."/>
            <person name="Fuma S."/>
            <person name="Galizzi A."/>
            <person name="Galleron N."/>
            <person name="Ghim S.-Y."/>
            <person name="Glaser P."/>
            <person name="Goffeau A."/>
            <person name="Golightly E.J."/>
            <person name="Grandi G."/>
            <person name="Guiseppi G."/>
            <person name="Guy B.J."/>
            <person name="Haga K."/>
            <person name="Haiech J."/>
            <person name="Harwood C.R."/>
            <person name="Henaut A."/>
            <person name="Hilbert H."/>
            <person name="Holsappel S."/>
            <person name="Hosono S."/>
            <person name="Hullo M.-F."/>
            <person name="Itaya M."/>
            <person name="Jones L.-M."/>
            <person name="Joris B."/>
            <person name="Karamata D."/>
            <person name="Kasahara Y."/>
            <person name="Klaerr-Blanchard M."/>
            <person name="Klein C."/>
            <person name="Kobayashi Y."/>
            <person name="Koetter P."/>
            <person name="Koningstein G."/>
            <person name="Krogh S."/>
            <person name="Kumano M."/>
            <person name="Kurita K."/>
            <person name="Lapidus A."/>
            <person name="Lardinois S."/>
            <person name="Lauber J."/>
            <person name="Lazarevic V."/>
            <person name="Lee S.-M."/>
            <person name="Levine A."/>
            <person name="Liu H."/>
            <person name="Masuda S."/>
            <person name="Mauel C."/>
            <person name="Medigue C."/>
            <person name="Medina N."/>
            <person name="Mellado R.P."/>
            <person name="Mizuno M."/>
            <person name="Moestl D."/>
            <person name="Nakai S."/>
            <person name="Noback M."/>
            <person name="Noone D."/>
            <person name="O'Reilly M."/>
            <person name="Ogawa K."/>
            <person name="Ogiwara A."/>
            <person name="Oudega B."/>
            <person name="Park S.-H."/>
            <person name="Parro V."/>
            <person name="Pohl T.M."/>
            <person name="Portetelle D."/>
            <person name="Porwollik S."/>
            <person name="Prescott A.M."/>
            <person name="Presecan E."/>
            <person name="Pujic P."/>
            <person name="Purnelle B."/>
            <person name="Rapoport G."/>
            <person name="Rey M."/>
            <person name="Reynolds S."/>
            <person name="Rieger M."/>
            <person name="Rivolta C."/>
            <person name="Rocha E."/>
            <person name="Roche B."/>
            <person name="Rose M."/>
            <person name="Sadaie Y."/>
            <person name="Sato T."/>
            <person name="Scanlan E."/>
            <person name="Schleich S."/>
            <person name="Schroeter R."/>
            <person name="Scoffone F."/>
            <person name="Sekiguchi J."/>
            <person name="Sekowska A."/>
            <person name="Seror S.J."/>
            <person name="Serror P."/>
            <person name="Shin B.-S."/>
            <person name="Soldo B."/>
            <person name="Sorokin A."/>
            <person name="Tacconi E."/>
            <person name="Takagi T."/>
            <person name="Takahashi H."/>
            <person name="Takemaru K."/>
            <person name="Takeuchi M."/>
            <person name="Tamakoshi A."/>
            <person name="Tanaka T."/>
            <person name="Terpstra P."/>
            <person name="Tognoni A."/>
            <person name="Tosato V."/>
            <person name="Uchiyama S."/>
            <person name="Vandenbol M."/>
            <person name="Vannier F."/>
            <person name="Vassarotti A."/>
            <person name="Viari A."/>
            <person name="Wambutt R."/>
            <person name="Wedler E."/>
            <person name="Wedler H."/>
            <person name="Weitzenegger T."/>
            <person name="Winters P."/>
            <person name="Wipat A."/>
            <person name="Yamamoto H."/>
            <person name="Yamane K."/>
            <person name="Yasumoto K."/>
            <person name="Yata K."/>
            <person name="Yoshida K."/>
            <person name="Yoshikawa H.-F."/>
            <person name="Zumstein E."/>
            <person name="Yoshikawa H."/>
            <person name="Danchin A."/>
        </authorList>
    </citation>
    <scope>NUCLEOTIDE SEQUENCE [LARGE SCALE GENOMIC DNA]</scope>
    <source>
        <strain>168</strain>
    </source>
</reference>
<proteinExistence type="inferred from homology"/>
<name>YTKC_BACSU</name>
<feature type="chain" id="PRO_0000172861" description="Uncharacterized protein YtkC">
    <location>
        <begin position="1"/>
        <end position="134"/>
    </location>
</feature>
<feature type="transmembrane region" description="Helical" evidence="1">
    <location>
        <begin position="5"/>
        <end position="25"/>
    </location>
</feature>
<feature type="transmembrane region" description="Helical" evidence="1">
    <location>
        <begin position="30"/>
        <end position="50"/>
    </location>
</feature>
<feature type="transmembrane region" description="Helical" evidence="1">
    <location>
        <begin position="62"/>
        <end position="82"/>
    </location>
</feature>
<evidence type="ECO:0000255" key="1"/>
<evidence type="ECO:0000305" key="2"/>
<gene>
    <name type="primary">ytkC</name>
    <name type="ordered locus">BSU30640</name>
</gene>
<organism>
    <name type="scientific">Bacillus subtilis (strain 168)</name>
    <dbReference type="NCBI Taxonomy" id="224308"/>
    <lineage>
        <taxon>Bacteria</taxon>
        <taxon>Bacillati</taxon>
        <taxon>Bacillota</taxon>
        <taxon>Bacilli</taxon>
        <taxon>Bacillales</taxon>
        <taxon>Bacillaceae</taxon>
        <taxon>Bacillus</taxon>
    </lineage>
</organism>
<sequence length="134" mass="15151">MDRDFGIFSFLAVSVSAAGFFFGGFQYSFLILLSLMAIEFISTTLKETIIHKLSFKKVFARLVKKLVTLALISVCHFFDQLLNTQGSIRDLAIMFYILYESVQIVVTASSLGIPVPQMLVDLLETLKNKFKRKP</sequence>